<comment type="function">
    <text evidence="5">Histone demethylase that demethylates 'Lys-9' (H3K9me) of histone H3 with a specific activity for H3K9me3 and H3K9me2. No activity on H3K4me3, H3K9me1, H3K27me2 and H3K36me3/2. Involved in the control of floral organ development by demethylating H3K9me3 and H3K9me2 in the promoter regions of DH1 and MADS47. The 'Lys-9' demethylation of these two genes is required for induction of their expression.</text>
</comment>
<comment type="catalytic activity">
    <reaction evidence="5">
        <text>N(6),N(6),N(6)-trimethyl-L-lysyl(9)-[histone H3] + 2 2-oxoglutarate + 2 O2 = N(6)-methyl-L-lysyl(9)-[histone H3] + 2 formaldehyde + 2 succinate + 2 CO2</text>
        <dbReference type="Rhea" id="RHEA:60200"/>
        <dbReference type="Rhea" id="RHEA-COMP:15538"/>
        <dbReference type="Rhea" id="RHEA-COMP:15542"/>
        <dbReference type="ChEBI" id="CHEBI:15379"/>
        <dbReference type="ChEBI" id="CHEBI:16526"/>
        <dbReference type="ChEBI" id="CHEBI:16810"/>
        <dbReference type="ChEBI" id="CHEBI:16842"/>
        <dbReference type="ChEBI" id="CHEBI:30031"/>
        <dbReference type="ChEBI" id="CHEBI:61929"/>
        <dbReference type="ChEBI" id="CHEBI:61961"/>
        <dbReference type="EC" id="1.14.11.66"/>
    </reaction>
    <physiologicalReaction direction="left-to-right" evidence="5">
        <dbReference type="Rhea" id="RHEA:60201"/>
    </physiologicalReaction>
</comment>
<comment type="cofactor">
    <cofactor evidence="1">
        <name>Fe(2+)</name>
        <dbReference type="ChEBI" id="CHEBI:29033"/>
    </cofactor>
    <text evidence="1">Binds 1 Fe(2+) ion per subunit.</text>
</comment>
<comment type="subcellular location">
    <subcellularLocation>
        <location evidence="2 5">Nucleus</location>
    </subcellularLocation>
    <text>Localizes mainly in heterochromatin foci.</text>
</comment>
<comment type="disruption phenotype">
    <text evidence="5">Defects in spikelet morphology, including floral organ numbers, depletion of lemma and/or palea (Fig. 4D), increased numbers of stamens and pistils.</text>
</comment>
<comment type="sequence caution" evidence="6">
    <conflict type="erroneous gene model prediction">
        <sequence resource="EMBL-CDS" id="AAL58187"/>
    </conflict>
</comment>
<evidence type="ECO:0000250" key="1">
    <source>
        <dbReference type="UniProtKB" id="Q53WJ1"/>
    </source>
</evidence>
<evidence type="ECO:0000255" key="2">
    <source>
        <dbReference type="PROSITE-ProRule" id="PRU00537"/>
    </source>
</evidence>
<evidence type="ECO:0000255" key="3">
    <source>
        <dbReference type="PROSITE-ProRule" id="PRU00538"/>
    </source>
</evidence>
<evidence type="ECO:0000256" key="4">
    <source>
        <dbReference type="SAM" id="MobiDB-lite"/>
    </source>
</evidence>
<evidence type="ECO:0000269" key="5">
    <source>
    </source>
</evidence>
<evidence type="ECO:0000305" key="6"/>
<feature type="chain" id="PRO_0000430002" description="Lysine-specific demethylase JMJ706">
    <location>
        <begin position="1"/>
        <end position="858"/>
    </location>
</feature>
<feature type="domain" description="JmjN" evidence="2">
    <location>
        <begin position="103"/>
        <end position="144"/>
    </location>
</feature>
<feature type="domain" description="JmjC" evidence="3">
    <location>
        <begin position="250"/>
        <end position="420"/>
    </location>
</feature>
<feature type="region of interest" description="Disordered" evidence="4">
    <location>
        <begin position="737"/>
        <end position="791"/>
    </location>
</feature>
<feature type="region of interest" description="Disordered" evidence="4">
    <location>
        <begin position="829"/>
        <end position="858"/>
    </location>
</feature>
<feature type="compositionally biased region" description="Basic and acidic residues" evidence="4">
    <location>
        <begin position="737"/>
        <end position="746"/>
    </location>
</feature>
<feature type="compositionally biased region" description="Polar residues" evidence="4">
    <location>
        <begin position="829"/>
        <end position="844"/>
    </location>
</feature>
<feature type="binding site" evidence="3">
    <location>
        <position position="293"/>
    </location>
    <ligand>
        <name>Fe cation</name>
        <dbReference type="ChEBI" id="CHEBI:24875"/>
        <note>catalytic</note>
    </ligand>
</feature>
<feature type="binding site" evidence="3">
    <location>
        <position position="295"/>
    </location>
    <ligand>
        <name>Fe cation</name>
        <dbReference type="ChEBI" id="CHEBI:24875"/>
        <note>catalytic</note>
    </ligand>
</feature>
<feature type="binding site" evidence="3">
    <location>
        <position position="388"/>
    </location>
    <ligand>
        <name>Fe cation</name>
        <dbReference type="ChEBI" id="CHEBI:24875"/>
        <note>catalytic</note>
    </ligand>
</feature>
<sequence length="858" mass="96299">MQQVEGRNCLPAEVRIGLETLKRRRLERMRLTAQNNAGDGPPVPARSGGDALRTPANCGVRLHANNGTALPSRTTQNKDPFAKRRVDKFDMSSLEWIDKIEECPVYYPTKEEFEDPIGYIQKIAPVASKYGICKIVSPVSASVPAGVVLMKEQPGFKFMTRVQPLRLAKWAEDDTVTFFMSERKYTFRDYEKMANKVFAKKYSSASCLPAKYVEEEFWREIAFGKMDFVEYACDVDGSAFSSSPHDQLGKSNWNLKNFSRLSNSVLRLLQTPIPGVTDPMLYIGMLFSMFAWHVEDHYLYSINYHHCGAFKTWYGIPGDAAPGFEKVASQFVYNKDILVGEGEDAAFDVLLGKTTMFPPNVLLDHNVPVYKAVQKPGEFVITFPRSYHAGFSHGFNCGEAVNFAISDWFPLGSVASRRYALLNRTPLLAHEELLCRSAVLLSHKLLNSDPKSLNKSEHPHSQRCLKSCFVQLMRFQRNTRGLLAKMGSQIHYKPKTYPNLSCSMCRRDCYITHVLCGCNFDPVCLHHEQELRSCPCKSNQVVYVREDIQELEALSRKFEKDICLDKEISGFDSYKQAEKNEPFFEITRNLRNTEVNLIEDAFSGATAADAAKSSPATSTLTSFAQHDVPVLAEAIVCANQADQLYSTTEQTISSPLVKGTDAVGANSSSMADANNGTGSCNASAVEYSGNSDSESEIFRVKRRSGVSVKPASDAKTSNLSDQQVLRRLKKVRPEIQQHNKRPEDYGHCSVPSGRMSMKNLNSSSSCGEEHWRMKRRQLETQQDESSYSAKQKSYSYPSTSYSFRGEFVEMSRDAAAEVRPKRLKIRLPSSSTNRVVEQGSSGQRFTRDDKSLGCWPAI</sequence>
<name>JM706_ORYSJ</name>
<protein>
    <recommendedName>
        <fullName>Lysine-specific demethylase JMJ706</fullName>
        <ecNumber evidence="5">1.14.11.66</ecNumber>
    </recommendedName>
    <alternativeName>
        <fullName>Jumonji domain-containing protein 706</fullName>
    </alternativeName>
    <alternativeName>
        <fullName>Lysine-specific histone demethylase JMJ706</fullName>
    </alternativeName>
    <alternativeName>
        <fullName>Protein JUMONJI 706</fullName>
    </alternativeName>
    <alternativeName>
        <fullName evidence="6">[histone H3]-trimethyl-L-lysine(9) demethylase JMJ706</fullName>
    </alternativeName>
</protein>
<reference key="1">
    <citation type="journal article" date="2003" name="Science">
        <title>In-depth view of structure, activity, and evolution of rice chromosome 10.</title>
        <authorList>
            <person name="Yu Y."/>
            <person name="Rambo T."/>
            <person name="Currie J."/>
            <person name="Saski C."/>
            <person name="Kim H.-R."/>
            <person name="Collura K."/>
            <person name="Thompson S."/>
            <person name="Simmons J."/>
            <person name="Yang T.-J."/>
            <person name="Nah G."/>
            <person name="Patel A.J."/>
            <person name="Thurmond S."/>
            <person name="Henry D."/>
            <person name="Oates R."/>
            <person name="Palmer M."/>
            <person name="Pries G."/>
            <person name="Gibson J."/>
            <person name="Anderson H."/>
            <person name="Paradkar M."/>
            <person name="Crane L."/>
            <person name="Dale J."/>
            <person name="Carver M.B."/>
            <person name="Wood T."/>
            <person name="Frisch D."/>
            <person name="Engler F."/>
            <person name="Soderlund C."/>
            <person name="Palmer L.E."/>
            <person name="Teytelman L."/>
            <person name="Nascimento L."/>
            <person name="De la Bastide M."/>
            <person name="Spiegel L."/>
            <person name="Ware D."/>
            <person name="O'Shaughnessy A."/>
            <person name="Dike S."/>
            <person name="Dedhia N."/>
            <person name="Preston R."/>
            <person name="Huang E."/>
            <person name="Ferraro K."/>
            <person name="Kuit K."/>
            <person name="Miller B."/>
            <person name="Zutavern T."/>
            <person name="Katzenberger F."/>
            <person name="Muller S."/>
            <person name="Balija V."/>
            <person name="Martienssen R.A."/>
            <person name="Stein L."/>
            <person name="Minx P."/>
            <person name="Johnson D."/>
            <person name="Cordum H."/>
            <person name="Mardis E."/>
            <person name="Cheng Z."/>
            <person name="Jiang J."/>
            <person name="Wilson R."/>
            <person name="McCombie W.R."/>
            <person name="Wing R.A."/>
            <person name="Yuan Q."/>
            <person name="Ouyang S."/>
            <person name="Liu J."/>
            <person name="Jones K.M."/>
            <person name="Gansberger K."/>
            <person name="Moffat K."/>
            <person name="Hill J."/>
            <person name="Tsitrin T."/>
            <person name="Overton L."/>
            <person name="Bera J."/>
            <person name="Kim M."/>
            <person name="Jin S."/>
            <person name="Tallon L."/>
            <person name="Ciecko A."/>
            <person name="Pai G."/>
            <person name="Van Aken S."/>
            <person name="Utterback T."/>
            <person name="Reidmuller S."/>
            <person name="Bormann J."/>
            <person name="Feldblyum T."/>
            <person name="Hsiao J."/>
            <person name="Zismann V."/>
            <person name="Blunt S."/>
            <person name="de Vazeille A.R."/>
            <person name="Shaffer T."/>
            <person name="Koo H."/>
            <person name="Suh B."/>
            <person name="Yang Q."/>
            <person name="Haas B."/>
            <person name="Peterson J."/>
            <person name="Pertea M."/>
            <person name="Volfovsky N."/>
            <person name="Wortman J."/>
            <person name="White O."/>
            <person name="Salzberg S.L."/>
            <person name="Fraser C.M."/>
            <person name="Buell C.R."/>
            <person name="Messing J."/>
            <person name="Song R."/>
            <person name="Fuks G."/>
            <person name="Llaca V."/>
            <person name="Kovchak S."/>
            <person name="Young S."/>
            <person name="Bowers J.E."/>
            <person name="Paterson A.H."/>
            <person name="Johns M.A."/>
            <person name="Mao L."/>
            <person name="Pan H."/>
            <person name="Dean R.A."/>
        </authorList>
    </citation>
    <scope>NUCLEOTIDE SEQUENCE [LARGE SCALE GENOMIC DNA]</scope>
    <source>
        <strain>cv. Nipponbare</strain>
    </source>
</reference>
<reference key="2">
    <citation type="journal article" date="2005" name="Nature">
        <title>The map-based sequence of the rice genome.</title>
        <authorList>
            <consortium name="International rice genome sequencing project (IRGSP)"/>
        </authorList>
    </citation>
    <scope>NUCLEOTIDE SEQUENCE [LARGE SCALE GENOMIC DNA]</scope>
    <source>
        <strain>cv. Nipponbare</strain>
    </source>
</reference>
<reference key="3">
    <citation type="journal article" date="2008" name="Nucleic Acids Res.">
        <title>The rice annotation project database (RAP-DB): 2008 update.</title>
        <authorList>
            <consortium name="The rice annotation project (RAP)"/>
        </authorList>
    </citation>
    <scope>GENOME REANNOTATION</scope>
    <source>
        <strain>cv. Nipponbare</strain>
    </source>
</reference>
<reference key="4">
    <citation type="journal article" date="2013" name="Rice">
        <title>Improvement of the Oryza sativa Nipponbare reference genome using next generation sequence and optical map data.</title>
        <authorList>
            <person name="Kawahara Y."/>
            <person name="de la Bastide M."/>
            <person name="Hamilton J.P."/>
            <person name="Kanamori H."/>
            <person name="McCombie W.R."/>
            <person name="Ouyang S."/>
            <person name="Schwartz D.C."/>
            <person name="Tanaka T."/>
            <person name="Wu J."/>
            <person name="Zhou S."/>
            <person name="Childs K.L."/>
            <person name="Davidson R.M."/>
            <person name="Lin H."/>
            <person name="Quesada-Ocampo L."/>
            <person name="Vaillancourt B."/>
            <person name="Sakai H."/>
            <person name="Lee S.S."/>
            <person name="Kim J."/>
            <person name="Numa H."/>
            <person name="Itoh T."/>
            <person name="Buell C.R."/>
            <person name="Matsumoto T."/>
        </authorList>
    </citation>
    <scope>GENOME REANNOTATION</scope>
    <source>
        <strain>cv. Nipponbare</strain>
    </source>
</reference>
<reference key="5">
    <citation type="journal article" date="2003" name="Science">
        <title>Collection, mapping, and annotation of over 28,000 cDNA clones from japonica rice.</title>
        <authorList>
            <consortium name="The rice full-length cDNA consortium"/>
        </authorList>
    </citation>
    <scope>NUCLEOTIDE SEQUENCE [LARGE SCALE MRNA]</scope>
    <source>
        <strain>cv. Nipponbare</strain>
    </source>
</reference>
<reference key="6">
    <citation type="journal article" date="2008" name="Proc. Natl. Acad. Sci. U.S.A.">
        <title>Rice jmjC domain-containing gene JMJ706 encodes H3K9 demethylase required for floral organ development.</title>
        <authorList>
            <person name="Sun Q."/>
            <person name="Zhou D.X."/>
        </authorList>
    </citation>
    <scope>FUNCTION</scope>
    <scope>CATALYTIC ACTIVITY</scope>
    <scope>SUBCELLULAR LOCATION</scope>
    <scope>DISRUPTION PHENOTYPE</scope>
    <source>
        <strain>cv. Zhonghua 11</strain>
    </source>
</reference>
<dbReference type="EC" id="1.14.11.66" evidence="5"/>
<dbReference type="EMBL" id="AC027037">
    <property type="protein sequence ID" value="AAL58187.1"/>
    <property type="status" value="ALT_SEQ"/>
    <property type="molecule type" value="Genomic_DNA"/>
</dbReference>
<dbReference type="EMBL" id="DP000086">
    <property type="protein sequence ID" value="ABB48025.1"/>
    <property type="molecule type" value="Genomic_DNA"/>
</dbReference>
<dbReference type="EMBL" id="AP008216">
    <property type="protein sequence ID" value="BAF27329.2"/>
    <property type="molecule type" value="Genomic_DNA"/>
</dbReference>
<dbReference type="EMBL" id="AP014966">
    <property type="protein sequence ID" value="BAT12215.1"/>
    <property type="molecule type" value="Genomic_DNA"/>
</dbReference>
<dbReference type="EMBL" id="AK073475">
    <property type="protein sequence ID" value="BAG93472.1"/>
    <property type="molecule type" value="mRNA"/>
</dbReference>
<dbReference type="RefSeq" id="XP_015614674.1">
    <property type="nucleotide sequence ID" value="XM_015759188.1"/>
</dbReference>
<dbReference type="RefSeq" id="XP_015614675.1">
    <property type="nucleotide sequence ID" value="XM_015759189.1"/>
</dbReference>
<dbReference type="SMR" id="Q336N8"/>
<dbReference type="FunCoup" id="Q336N8">
    <property type="interactions" value="773"/>
</dbReference>
<dbReference type="STRING" id="39947.Q336N8"/>
<dbReference type="PaxDb" id="39947-Q336N8"/>
<dbReference type="EnsemblPlants" id="Os10t0577600-01">
    <property type="protein sequence ID" value="Os10t0577600-01"/>
    <property type="gene ID" value="Os10g0577600"/>
</dbReference>
<dbReference type="Gramene" id="Os10t0577600-01">
    <property type="protein sequence ID" value="Os10t0577600-01"/>
    <property type="gene ID" value="Os10g0577600"/>
</dbReference>
<dbReference type="KEGG" id="dosa:Os10g0577600"/>
<dbReference type="eggNOG" id="KOG1246">
    <property type="taxonomic scope" value="Eukaryota"/>
</dbReference>
<dbReference type="HOGENOM" id="CLU_016978_0_0_1"/>
<dbReference type="InParanoid" id="Q336N8"/>
<dbReference type="OMA" id="CFVQLMR"/>
<dbReference type="OrthoDB" id="1678912at2759"/>
<dbReference type="BRENDA" id="1.14.11.66">
    <property type="organism ID" value="4460"/>
</dbReference>
<dbReference type="Proteomes" id="UP000000763">
    <property type="component" value="Chromosome 10"/>
</dbReference>
<dbReference type="Proteomes" id="UP000059680">
    <property type="component" value="Chromosome 10"/>
</dbReference>
<dbReference type="GO" id="GO:0000785">
    <property type="term" value="C:chromatin"/>
    <property type="evidence" value="ECO:0000318"/>
    <property type="project" value="GO_Central"/>
</dbReference>
<dbReference type="GO" id="GO:0000792">
    <property type="term" value="C:heterochromatin"/>
    <property type="evidence" value="ECO:0000314"/>
    <property type="project" value="UniProtKB"/>
</dbReference>
<dbReference type="GO" id="GO:0005634">
    <property type="term" value="C:nucleus"/>
    <property type="evidence" value="ECO:0000318"/>
    <property type="project" value="GO_Central"/>
</dbReference>
<dbReference type="GO" id="GO:0032452">
    <property type="term" value="F:histone demethylase activity"/>
    <property type="evidence" value="ECO:0000318"/>
    <property type="project" value="GO_Central"/>
</dbReference>
<dbReference type="GO" id="GO:0032454">
    <property type="term" value="F:histone H3K9 demethylase activity"/>
    <property type="evidence" value="ECO:0000314"/>
    <property type="project" value="UniProtKB"/>
</dbReference>
<dbReference type="GO" id="GO:0140684">
    <property type="term" value="F:histone H3K9me2/H3K9me3 demethylase activity"/>
    <property type="evidence" value="ECO:0007669"/>
    <property type="project" value="RHEA"/>
</dbReference>
<dbReference type="GO" id="GO:0046872">
    <property type="term" value="F:metal ion binding"/>
    <property type="evidence" value="ECO:0007669"/>
    <property type="project" value="UniProtKB-KW"/>
</dbReference>
<dbReference type="GO" id="GO:0006338">
    <property type="term" value="P:chromatin remodeling"/>
    <property type="evidence" value="ECO:0000318"/>
    <property type="project" value="GO_Central"/>
</dbReference>
<dbReference type="GO" id="GO:0048439">
    <property type="term" value="P:flower morphogenesis"/>
    <property type="evidence" value="ECO:0000315"/>
    <property type="project" value="UniProtKB"/>
</dbReference>
<dbReference type="GO" id="GO:0010468">
    <property type="term" value="P:regulation of gene expression"/>
    <property type="evidence" value="ECO:0000318"/>
    <property type="project" value="GO_Central"/>
</dbReference>
<dbReference type="GO" id="GO:0045815">
    <property type="term" value="P:transcription initiation-coupled chromatin remodeling"/>
    <property type="evidence" value="ECO:0000315"/>
    <property type="project" value="UniProtKB"/>
</dbReference>
<dbReference type="FunFam" id="2.60.120.650:FF:000016">
    <property type="entry name" value="Lysine-specific demethylase isoform A"/>
    <property type="match status" value="1"/>
</dbReference>
<dbReference type="Gene3D" id="2.60.120.650">
    <property type="entry name" value="Cupin"/>
    <property type="match status" value="1"/>
</dbReference>
<dbReference type="InterPro" id="IPR003347">
    <property type="entry name" value="JmjC_dom"/>
</dbReference>
<dbReference type="InterPro" id="IPR003349">
    <property type="entry name" value="JmjN"/>
</dbReference>
<dbReference type="InterPro" id="IPR004198">
    <property type="entry name" value="Znf_C5HC2"/>
</dbReference>
<dbReference type="PANTHER" id="PTHR10694">
    <property type="entry name" value="LYSINE-SPECIFIC DEMETHYLASE"/>
    <property type="match status" value="1"/>
</dbReference>
<dbReference type="PANTHER" id="PTHR10694:SF107">
    <property type="entry name" value="LYSINE-SPECIFIC DEMETHYLASE JMJ706"/>
    <property type="match status" value="1"/>
</dbReference>
<dbReference type="Pfam" id="PF02373">
    <property type="entry name" value="JmjC"/>
    <property type="match status" value="1"/>
</dbReference>
<dbReference type="Pfam" id="PF02375">
    <property type="entry name" value="JmjN"/>
    <property type="match status" value="1"/>
</dbReference>
<dbReference type="Pfam" id="PF02928">
    <property type="entry name" value="zf-C5HC2"/>
    <property type="match status" value="1"/>
</dbReference>
<dbReference type="SMART" id="SM00558">
    <property type="entry name" value="JmjC"/>
    <property type="match status" value="1"/>
</dbReference>
<dbReference type="SMART" id="SM00545">
    <property type="entry name" value="JmjN"/>
    <property type="match status" value="1"/>
</dbReference>
<dbReference type="SUPFAM" id="SSF51197">
    <property type="entry name" value="Clavaminate synthase-like"/>
    <property type="match status" value="1"/>
</dbReference>
<dbReference type="PROSITE" id="PS51184">
    <property type="entry name" value="JMJC"/>
    <property type="match status" value="1"/>
</dbReference>
<dbReference type="PROSITE" id="PS51183">
    <property type="entry name" value="JMJN"/>
    <property type="match status" value="1"/>
</dbReference>
<keyword id="KW-0156">Chromatin regulator</keyword>
<keyword id="KW-0223">Dioxygenase</keyword>
<keyword id="KW-0408">Iron</keyword>
<keyword id="KW-0479">Metal-binding</keyword>
<keyword id="KW-0539">Nucleus</keyword>
<keyword id="KW-0560">Oxidoreductase</keyword>
<keyword id="KW-1185">Reference proteome</keyword>
<keyword id="KW-0804">Transcription</keyword>
<keyword id="KW-0805">Transcription regulation</keyword>
<gene>
    <name type="primary">JMJ706</name>
    <name type="ordered locus">Os10g0577600</name>
    <name type="ordered locus">LOC_Os10g42690</name>
    <name type="ORF">OSJNBa0035H01.2</name>
</gene>
<proteinExistence type="evidence at protein level"/>
<organism>
    <name type="scientific">Oryza sativa subsp. japonica</name>
    <name type="common">Rice</name>
    <dbReference type="NCBI Taxonomy" id="39947"/>
    <lineage>
        <taxon>Eukaryota</taxon>
        <taxon>Viridiplantae</taxon>
        <taxon>Streptophyta</taxon>
        <taxon>Embryophyta</taxon>
        <taxon>Tracheophyta</taxon>
        <taxon>Spermatophyta</taxon>
        <taxon>Magnoliopsida</taxon>
        <taxon>Liliopsida</taxon>
        <taxon>Poales</taxon>
        <taxon>Poaceae</taxon>
        <taxon>BOP clade</taxon>
        <taxon>Oryzoideae</taxon>
        <taxon>Oryzeae</taxon>
        <taxon>Oryzinae</taxon>
        <taxon>Oryza</taxon>
        <taxon>Oryza sativa</taxon>
    </lineage>
</organism>
<accession>Q336N8</accession>
<accession>A0A0P0XYM9</accession>
<accession>Q0IVD6</accession>
<accession>Q8W3G5</accession>